<name>MQO_PROMH</name>
<proteinExistence type="inferred from homology"/>
<reference key="1">
    <citation type="journal article" date="2008" name="J. Bacteriol.">
        <title>Complete genome sequence of uropathogenic Proteus mirabilis, a master of both adherence and motility.</title>
        <authorList>
            <person name="Pearson M.M."/>
            <person name="Sebaihia M."/>
            <person name="Churcher C."/>
            <person name="Quail M.A."/>
            <person name="Seshasayee A.S."/>
            <person name="Luscombe N.M."/>
            <person name="Abdellah Z."/>
            <person name="Arrosmith C."/>
            <person name="Atkin B."/>
            <person name="Chillingworth T."/>
            <person name="Hauser H."/>
            <person name="Jagels K."/>
            <person name="Moule S."/>
            <person name="Mungall K."/>
            <person name="Norbertczak H."/>
            <person name="Rabbinowitsch E."/>
            <person name="Walker D."/>
            <person name="Whithead S."/>
            <person name="Thomson N.R."/>
            <person name="Rather P.N."/>
            <person name="Parkhill J."/>
            <person name="Mobley H.L.T."/>
        </authorList>
    </citation>
    <scope>NUCLEOTIDE SEQUENCE [LARGE SCALE GENOMIC DNA]</scope>
    <source>
        <strain>HI4320</strain>
    </source>
</reference>
<dbReference type="EC" id="1.1.5.4" evidence="1"/>
<dbReference type="EMBL" id="AM942759">
    <property type="protein sequence ID" value="CAR43976.1"/>
    <property type="molecule type" value="Genomic_DNA"/>
</dbReference>
<dbReference type="RefSeq" id="WP_012368161.1">
    <property type="nucleotide sequence ID" value="NC_010554.1"/>
</dbReference>
<dbReference type="SMR" id="B4F088"/>
<dbReference type="EnsemblBacteria" id="CAR43976">
    <property type="protein sequence ID" value="CAR43976"/>
    <property type="gene ID" value="PMI1931"/>
</dbReference>
<dbReference type="GeneID" id="6800210"/>
<dbReference type="KEGG" id="pmr:PMI1931"/>
<dbReference type="eggNOG" id="COG0579">
    <property type="taxonomic scope" value="Bacteria"/>
</dbReference>
<dbReference type="HOGENOM" id="CLU_028151_0_0_6"/>
<dbReference type="UniPathway" id="UPA00223">
    <property type="reaction ID" value="UER01008"/>
</dbReference>
<dbReference type="Proteomes" id="UP000008319">
    <property type="component" value="Chromosome"/>
</dbReference>
<dbReference type="GO" id="GO:0047545">
    <property type="term" value="F:2-hydroxyglutarate dehydrogenase activity"/>
    <property type="evidence" value="ECO:0007669"/>
    <property type="project" value="TreeGrafter"/>
</dbReference>
<dbReference type="GO" id="GO:0008924">
    <property type="term" value="F:L-malate dehydrogenase (quinone) activity"/>
    <property type="evidence" value="ECO:0007669"/>
    <property type="project" value="UniProtKB-UniRule"/>
</dbReference>
<dbReference type="GO" id="GO:0006099">
    <property type="term" value="P:tricarboxylic acid cycle"/>
    <property type="evidence" value="ECO:0007669"/>
    <property type="project" value="UniProtKB-UniRule"/>
</dbReference>
<dbReference type="Gene3D" id="3.50.50.60">
    <property type="entry name" value="FAD/NAD(P)-binding domain"/>
    <property type="match status" value="1"/>
</dbReference>
<dbReference type="HAMAP" id="MF_00212">
    <property type="entry name" value="MQO"/>
    <property type="match status" value="1"/>
</dbReference>
<dbReference type="InterPro" id="IPR036188">
    <property type="entry name" value="FAD/NAD-bd_sf"/>
</dbReference>
<dbReference type="InterPro" id="IPR006231">
    <property type="entry name" value="MQO"/>
</dbReference>
<dbReference type="NCBIfam" id="TIGR01320">
    <property type="entry name" value="mal_quin_oxido"/>
    <property type="match status" value="1"/>
</dbReference>
<dbReference type="NCBIfam" id="NF003603">
    <property type="entry name" value="PRK05257.1-1"/>
    <property type="match status" value="1"/>
</dbReference>
<dbReference type="NCBIfam" id="NF003605">
    <property type="entry name" value="PRK05257.1-4"/>
    <property type="match status" value="1"/>
</dbReference>
<dbReference type="NCBIfam" id="NF003606">
    <property type="entry name" value="PRK05257.2-1"/>
    <property type="match status" value="1"/>
</dbReference>
<dbReference type="NCBIfam" id="NF003608">
    <property type="entry name" value="PRK05257.2-4"/>
    <property type="match status" value="1"/>
</dbReference>
<dbReference type="NCBIfam" id="NF003611">
    <property type="entry name" value="PRK05257.3-2"/>
    <property type="match status" value="1"/>
</dbReference>
<dbReference type="NCBIfam" id="NF009875">
    <property type="entry name" value="PRK13339.1"/>
    <property type="match status" value="1"/>
</dbReference>
<dbReference type="PANTHER" id="PTHR43104">
    <property type="entry name" value="L-2-HYDROXYGLUTARATE DEHYDROGENASE, MITOCHONDRIAL"/>
    <property type="match status" value="1"/>
</dbReference>
<dbReference type="PANTHER" id="PTHR43104:SF2">
    <property type="entry name" value="L-2-HYDROXYGLUTARATE DEHYDROGENASE, MITOCHONDRIAL"/>
    <property type="match status" value="1"/>
</dbReference>
<dbReference type="Pfam" id="PF06039">
    <property type="entry name" value="Mqo"/>
    <property type="match status" value="1"/>
</dbReference>
<dbReference type="SUPFAM" id="SSF51905">
    <property type="entry name" value="FAD/NAD(P)-binding domain"/>
    <property type="match status" value="1"/>
</dbReference>
<gene>
    <name evidence="1" type="primary">mqo</name>
    <name type="ordered locus">PMI1931</name>
</gene>
<feature type="chain" id="PRO_1000099879" description="Probable malate:quinone oxidoreductase">
    <location>
        <begin position="1"/>
        <end position="498"/>
    </location>
</feature>
<comment type="catalytic activity">
    <reaction evidence="1">
        <text>(S)-malate + a quinone = a quinol + oxaloacetate</text>
        <dbReference type="Rhea" id="RHEA:46012"/>
        <dbReference type="ChEBI" id="CHEBI:15589"/>
        <dbReference type="ChEBI" id="CHEBI:16452"/>
        <dbReference type="ChEBI" id="CHEBI:24646"/>
        <dbReference type="ChEBI" id="CHEBI:132124"/>
        <dbReference type="EC" id="1.1.5.4"/>
    </reaction>
</comment>
<comment type="cofactor">
    <cofactor evidence="1">
        <name>FAD</name>
        <dbReference type="ChEBI" id="CHEBI:57692"/>
    </cofactor>
</comment>
<comment type="pathway">
    <text evidence="1">Carbohydrate metabolism; tricarboxylic acid cycle; oxaloacetate from (S)-malate (quinone route): step 1/1.</text>
</comment>
<comment type="similarity">
    <text evidence="1">Belongs to the MQO family.</text>
</comment>
<keyword id="KW-0274">FAD</keyword>
<keyword id="KW-0285">Flavoprotein</keyword>
<keyword id="KW-0560">Oxidoreductase</keyword>
<keyword id="KW-1185">Reference proteome</keyword>
<keyword id="KW-0816">Tricarboxylic acid cycle</keyword>
<evidence type="ECO:0000255" key="1">
    <source>
        <dbReference type="HAMAP-Rule" id="MF_00212"/>
    </source>
</evidence>
<sequence length="498" mass="55498">MNKTISEHVDVALIGAGIMSATLGTLLKELESNLKVAMFERLNDCGQESSNSWNNAGTGHAANCELNYTPPNPDGTVNISKALEVNTEFDLSRQLWSYLVTKGKIADPRDFIHACPHMSFVWGADNVKFLHQRYRQMSANHCYENMQYSEDKQQIEDWAPLIMEGRDPNQQLAVTRVATGTDVDYGALTHLLVKQLSQQDNFELHYKHDVIDIKRNETGGWNIEVKDLTTHDKYLITAKYVFVGAGGRAIDLLQKSGIPEGKGYGGFPVSGIWLRCDEDKISSRHHAKVYGKADVGSPPMSVPHLDTRIIAGKRSLLFGPYAGFSSKFLKHGSYLDLFESIRPSNIEPMLDVAKDNWSLTEYLIGQVLQTSAHQFEMLKQFYPQAQHEDWQEAVAGQRVQIIKPAAKHHGVLEFGTELISSADKSFSVLLGASPGASTAAFIAINIIKSCFKQQLENEGWEDRLKTIIPTYGIDLKIDADACRNIRASTAKILKLETP</sequence>
<accession>B4F088</accession>
<organism>
    <name type="scientific">Proteus mirabilis (strain HI4320)</name>
    <dbReference type="NCBI Taxonomy" id="529507"/>
    <lineage>
        <taxon>Bacteria</taxon>
        <taxon>Pseudomonadati</taxon>
        <taxon>Pseudomonadota</taxon>
        <taxon>Gammaproteobacteria</taxon>
        <taxon>Enterobacterales</taxon>
        <taxon>Morganellaceae</taxon>
        <taxon>Proteus</taxon>
    </lineage>
</organism>
<protein>
    <recommendedName>
        <fullName evidence="1">Probable malate:quinone oxidoreductase</fullName>
        <ecNumber evidence="1">1.1.5.4</ecNumber>
    </recommendedName>
    <alternativeName>
        <fullName evidence="1">MQO</fullName>
    </alternativeName>
    <alternativeName>
        <fullName evidence="1">Malate dehydrogenase [quinone]</fullName>
    </alternativeName>
</protein>